<keyword id="KW-0998">Cell outer membrane</keyword>
<keyword id="KW-0961">Cell wall biogenesis/degradation</keyword>
<keyword id="KW-0456">Lyase</keyword>
<keyword id="KW-0472">Membrane</keyword>
<keyword id="KW-1185">Reference proteome</keyword>
<keyword id="KW-0732">Signal</keyword>
<organism>
    <name type="scientific">Saccharophagus degradans (strain 2-40 / ATCC 43961 / DSM 17024)</name>
    <dbReference type="NCBI Taxonomy" id="203122"/>
    <lineage>
        <taxon>Bacteria</taxon>
        <taxon>Pseudomonadati</taxon>
        <taxon>Pseudomonadota</taxon>
        <taxon>Gammaproteobacteria</taxon>
        <taxon>Cellvibrionales</taxon>
        <taxon>Cellvibrionaceae</taxon>
        <taxon>Saccharophagus</taxon>
    </lineage>
</organism>
<reference key="1">
    <citation type="journal article" date="2008" name="PLoS Genet.">
        <title>Complete genome sequence of the complex carbohydrate-degrading marine bacterium, Saccharophagus degradans strain 2-40 T.</title>
        <authorList>
            <person name="Weiner R.M."/>
            <person name="Taylor L.E. II"/>
            <person name="Henrissat B."/>
            <person name="Hauser L."/>
            <person name="Land M."/>
            <person name="Coutinho P.M."/>
            <person name="Rancurel C."/>
            <person name="Saunders E.H."/>
            <person name="Longmire A.G."/>
            <person name="Zhang H."/>
            <person name="Bayer E.A."/>
            <person name="Gilbert H.J."/>
            <person name="Larimer F."/>
            <person name="Zhulin I.B."/>
            <person name="Ekborg N.A."/>
            <person name="Lamed R."/>
            <person name="Richardson P.M."/>
            <person name="Borovok I."/>
            <person name="Hutcheson S."/>
        </authorList>
    </citation>
    <scope>NUCLEOTIDE SEQUENCE [LARGE SCALE GENOMIC DNA]</scope>
    <source>
        <strain>2-40 / ATCC 43961 / DSM 17024</strain>
    </source>
</reference>
<gene>
    <name evidence="1" type="primary">mltF</name>
    <name type="ordered locus">Sde_1477</name>
</gene>
<protein>
    <recommendedName>
        <fullName evidence="1">Membrane-bound lytic murein transglycosylase F</fullName>
        <ecNumber evidence="1">4.2.2.n1</ecNumber>
    </recommendedName>
    <alternativeName>
        <fullName evidence="1">Murein lyase F</fullName>
    </alternativeName>
</protein>
<sequence length="501" mass="56694">MTKILLNTASTVLTRLWKLSLLGLVFAVAAATLVSSRIPTTLEEVKSSGKLIVISRNGPTTYYEGPAGHTGFEYVMAKAFAKHLGVDLEVREIEDLGEMLDKVGTKAGHLAASGLTVTEKRARKVLFAEPYLQVTQQLIYRSGESKPETIEDLYGKRVMVISNSSHSERLKELQREYRDLAWEEQHDVDMLDLLEMVHNGKIDYTIVDSNAYQINRPVYPKATVAFDISEPQDLAWAFPQQKDASLYNEAQKFFKDIKQTGAIDDAMETFYGHLGEIDYSGAILFAHRLQSRLPKWETHLKAAAEKNDLDWQLLAALSYQESHWNPKAKSPTGVRGFMMLTLNTAKEVGVKNRLNAEQSIYGGARYFKSLHGRLPERIKEPDRTWLALAAYNIGLGHLEDARILTEHFGGNPDKWADVKQQLPLLAKRKYYKFTKHGYARGWEAVDYVQNIRNFHTIIAWNEIENQRLQQLAQNENHVSDYAQFSPTVTEAVKSISGTSSL</sequence>
<accession>Q21KP0</accession>
<proteinExistence type="inferred from homology"/>
<comment type="function">
    <text evidence="1">Murein-degrading enzyme that degrades murein glycan strands and insoluble, high-molecular weight murein sacculi, with the concomitant formation of a 1,6-anhydromuramoyl product. Lytic transglycosylases (LTs) play an integral role in the metabolism of the peptidoglycan (PG) sacculus. Their lytic action creates space within the PG sacculus to allow for its expansion as well as for the insertion of various structures such as secretion systems and flagella.</text>
</comment>
<comment type="catalytic activity">
    <reaction evidence="1">
        <text>Exolytic cleavage of the (1-&gt;4)-beta-glycosidic linkage between N-acetylmuramic acid (MurNAc) and N-acetylglucosamine (GlcNAc) residues in peptidoglycan, from either the reducing or the non-reducing ends of the peptidoglycan chains, with concomitant formation of a 1,6-anhydrobond in the MurNAc residue.</text>
        <dbReference type="EC" id="4.2.2.n1"/>
    </reaction>
</comment>
<comment type="subcellular location">
    <subcellularLocation>
        <location>Cell outer membrane</location>
        <topology>Peripheral membrane protein</topology>
    </subcellularLocation>
    <text evidence="1">Attached to the inner leaflet of the outer membrane.</text>
</comment>
<comment type="domain">
    <text evidence="1">The N-terminal domain does not have lytic activity and probably modulates enzymatic activity. The C-terminal domain is the catalytic active domain.</text>
</comment>
<comment type="similarity">
    <text evidence="1">In the N-terminal section; belongs to the bacterial solute-binding protein 3 family.</text>
</comment>
<comment type="similarity">
    <text evidence="1">In the C-terminal section; belongs to the transglycosylase Slt family.</text>
</comment>
<evidence type="ECO:0000255" key="1">
    <source>
        <dbReference type="HAMAP-Rule" id="MF_02016"/>
    </source>
</evidence>
<name>MLTF_SACD2</name>
<dbReference type="EC" id="4.2.2.n1" evidence="1"/>
<dbReference type="EMBL" id="CP000282">
    <property type="protein sequence ID" value="ABD80739.1"/>
    <property type="molecule type" value="Genomic_DNA"/>
</dbReference>
<dbReference type="RefSeq" id="WP_011467959.1">
    <property type="nucleotide sequence ID" value="NC_007912.1"/>
</dbReference>
<dbReference type="SMR" id="Q21KP0"/>
<dbReference type="STRING" id="203122.Sde_1477"/>
<dbReference type="CAZy" id="GH23">
    <property type="family name" value="Glycoside Hydrolase Family 23"/>
</dbReference>
<dbReference type="GeneID" id="98613153"/>
<dbReference type="KEGG" id="sde:Sde_1477"/>
<dbReference type="eggNOG" id="COG4623">
    <property type="taxonomic scope" value="Bacteria"/>
</dbReference>
<dbReference type="HOGENOM" id="CLU_027494_0_1_6"/>
<dbReference type="Proteomes" id="UP000001947">
    <property type="component" value="Chromosome"/>
</dbReference>
<dbReference type="GO" id="GO:0009279">
    <property type="term" value="C:cell outer membrane"/>
    <property type="evidence" value="ECO:0007669"/>
    <property type="project" value="UniProtKB-SubCell"/>
</dbReference>
<dbReference type="GO" id="GO:0008933">
    <property type="term" value="F:peptidoglycan lytic transglycosylase activity"/>
    <property type="evidence" value="ECO:0007669"/>
    <property type="project" value="UniProtKB-UniRule"/>
</dbReference>
<dbReference type="GO" id="GO:0016998">
    <property type="term" value="P:cell wall macromolecule catabolic process"/>
    <property type="evidence" value="ECO:0007669"/>
    <property type="project" value="UniProtKB-UniRule"/>
</dbReference>
<dbReference type="GO" id="GO:0071555">
    <property type="term" value="P:cell wall organization"/>
    <property type="evidence" value="ECO:0007669"/>
    <property type="project" value="UniProtKB-KW"/>
</dbReference>
<dbReference type="GO" id="GO:0009253">
    <property type="term" value="P:peptidoglycan catabolic process"/>
    <property type="evidence" value="ECO:0007669"/>
    <property type="project" value="TreeGrafter"/>
</dbReference>
<dbReference type="CDD" id="cd13403">
    <property type="entry name" value="MLTF-like"/>
    <property type="match status" value="1"/>
</dbReference>
<dbReference type="CDD" id="cd01009">
    <property type="entry name" value="PBP2_YfhD_N"/>
    <property type="match status" value="1"/>
</dbReference>
<dbReference type="Gene3D" id="1.10.530.10">
    <property type="match status" value="1"/>
</dbReference>
<dbReference type="Gene3D" id="3.40.190.10">
    <property type="entry name" value="Periplasmic binding protein-like II"/>
    <property type="match status" value="2"/>
</dbReference>
<dbReference type="HAMAP" id="MF_02016">
    <property type="entry name" value="MltF"/>
    <property type="match status" value="1"/>
</dbReference>
<dbReference type="InterPro" id="IPR023346">
    <property type="entry name" value="Lysozyme-like_dom_sf"/>
</dbReference>
<dbReference type="InterPro" id="IPR023703">
    <property type="entry name" value="MltF"/>
</dbReference>
<dbReference type="InterPro" id="IPR001638">
    <property type="entry name" value="Solute-binding_3/MltF_N"/>
</dbReference>
<dbReference type="InterPro" id="IPR008258">
    <property type="entry name" value="Transglycosylase_SLT_dom_1"/>
</dbReference>
<dbReference type="NCBIfam" id="NF008112">
    <property type="entry name" value="PRK10859.1"/>
    <property type="match status" value="1"/>
</dbReference>
<dbReference type="PANTHER" id="PTHR35936">
    <property type="entry name" value="MEMBRANE-BOUND LYTIC MUREIN TRANSGLYCOSYLASE F"/>
    <property type="match status" value="1"/>
</dbReference>
<dbReference type="PANTHER" id="PTHR35936:SF32">
    <property type="entry name" value="MEMBRANE-BOUND LYTIC MUREIN TRANSGLYCOSYLASE F"/>
    <property type="match status" value="1"/>
</dbReference>
<dbReference type="Pfam" id="PF00497">
    <property type="entry name" value="SBP_bac_3"/>
    <property type="match status" value="1"/>
</dbReference>
<dbReference type="Pfam" id="PF01464">
    <property type="entry name" value="SLT"/>
    <property type="match status" value="1"/>
</dbReference>
<dbReference type="SMART" id="SM00062">
    <property type="entry name" value="PBPb"/>
    <property type="match status" value="1"/>
</dbReference>
<dbReference type="SUPFAM" id="SSF53955">
    <property type="entry name" value="Lysozyme-like"/>
    <property type="match status" value="1"/>
</dbReference>
<dbReference type="SUPFAM" id="SSF53850">
    <property type="entry name" value="Periplasmic binding protein-like II"/>
    <property type="match status" value="1"/>
</dbReference>
<feature type="signal peptide" evidence="1">
    <location>
        <begin position="1"/>
        <end position="29"/>
    </location>
</feature>
<feature type="chain" id="PRO_0000353969" description="Membrane-bound lytic murein transglycosylase F">
    <location>
        <begin position="30"/>
        <end position="501"/>
    </location>
</feature>
<feature type="region of interest" description="Non-LT domain" evidence="1">
    <location>
        <begin position="30"/>
        <end position="274"/>
    </location>
</feature>
<feature type="region of interest" description="LT domain" evidence="1">
    <location>
        <begin position="275"/>
        <end position="501"/>
    </location>
</feature>
<feature type="active site" evidence="1">
    <location>
        <position position="321"/>
    </location>
</feature>